<comment type="function">
    <text evidence="2 3 4 5">O-acetyltransferase; part of the 2 gene clusters that mediate the biosynthesis of fusicoccins, diterpene glucosides that display phytohormone-like activity and function as potent activators of plasma membrane H(+)-ATPases in plants by modifying 14-3-3 proteins and cause the plant disease constriction canker (PubMed:22870285). The first step in the pathway is performed by the fusicoccadiene synthase PaFS that possesses both prenyl transferase and terpene cyclase activity, converting isopentenyl diphosphate and dimethylallyl diphosphate into geranylgeranyl diphosphate (GGDP) and successively converting GGDP into fusicocca-2,10(14)-diene, a precursor for fusicoccin H (PubMed:17360612). The second step is the oxidation at the C-8 position by the cytochrome P450 monooxygenase PaP450-2 to yield fusicocca-2,10(14)-diene-8-beta-ol (PubMed:22870285). The cytochrome P450 monooxygenase PaP450-1 then catalyzes the hydroxylation at the C-16 position to produce fusicocca-2,10(14)-diene-8-beta,16-diol (PubMed:22870285). The dioxygenase fc-dox then catalyzes the 16-oxydation of fusicocca-2,10(14)-diene-8-beta,16-diol to yield an aldehyde (8-beta-hydroxyfusicocca-1,10(14)-dien-16-al) (PubMed:21299202, PubMed:22870285). The short-chain dehydrogenase/reductase fc-sdr catalyzes the reduction of the aldehyde to yield fusicocca-1,10(14)-diene-8-beta,16-diol (PubMed:21299202, PubMed:22870285). The next step is the hydroxylation at C-9 performed by the cytochrome P450 monooxygenase PaP450-3 that leads to fusicoccin H aglycon which is glycosylated to fusicoccin H by the O-glycosyltransferase PaGT (PubMed:22870285). Hydroxylation at C-12 by the cytochrome P450 monooxygenase PaP450-4 leads then to the production of fusicoccin Q and is followed by methylation by the O-methyltransferase PaMT to yield fusicoccin P (PubMed:22870285). Fusicoccin P is further converted to fusicoccin J via prenylation by the O-glucose prenyltransferase PaPT (PubMed:22287087). Cytochrome P450 monooxygenase PaP450-5 then performs hydroxylation at C-19 to yield dideacetyl-fusicoccin A which is acetylated to 3'-O-deacetyl-fusicoccin A by the O-acetyltransferase PaAT-2 (PubMed:22870285). Finally, a another acetylation by the O-acetyltransferase PaAT-1 yields fusicoccin A (PubMed:22870285).</text>
</comment>
<comment type="biophysicochemical properties">
    <kinetics>
        <KM evidence="5">170 uM for dideacetyl-fusicoccin A</KM>
        <KM evidence="5">63 uM for acetyl-CoA</KM>
    </kinetics>
    <phDependence>
        <text evidence="5">Optimum pH is 8.5.</text>
    </phDependence>
    <temperatureDependence>
        <text evidence="5">Optimum temperature is 35 degrees Celsius.</text>
    </temperatureDependence>
</comment>
<comment type="pathway">
    <text evidence="5">Mycotoxin biosynthesis.</text>
</comment>
<comment type="disruption phenotype">
    <text evidence="5">Accumulates fusicoccin J.</text>
</comment>
<comment type="similarity">
    <text evidence="7">Belongs to the plant acyltransferase family.</text>
</comment>
<accession>L0MZK4</accession>
<proteinExistence type="evidence at protein level"/>
<reference key="1">
    <citation type="journal article" date="2012" name="PLoS ONE">
        <title>Molecular breeding of a fungus producing a precursor diterpene suitable for semi-synthesis by dissection of the biosynthetic machinery.</title>
        <authorList>
            <person name="Noike M."/>
            <person name="Ono Y."/>
            <person name="Araki Y."/>
            <person name="Tanio R."/>
            <person name="Higuchi Y."/>
            <person name="Nitta H."/>
            <person name="Hamano Y."/>
            <person name="Toyomasu T."/>
            <person name="Sassa T."/>
            <person name="Kato N."/>
            <person name="Dairi T."/>
        </authorList>
    </citation>
    <scope>NUCLEOTIDE SEQUENCE [MRNA]</scope>
    <scope>FUNCTION</scope>
    <scope>CATALYTIC ACTIVITY</scope>
    <scope>BIOPHYSICOCHEMICAL PROPERTIES</scope>
    <scope>DISRUPTION PHENOTYPE</scope>
    <scope>PATHWAY</scope>
</reference>
<reference key="2">
    <citation type="journal article" date="2007" name="Proc. Natl. Acad. Sci. U.S.A.">
        <title>Fusicoccins are biosynthesized by an unusual chimera diterpene synthase in fungi.</title>
        <authorList>
            <person name="Toyomasu T."/>
            <person name="Tsukahara M."/>
            <person name="Kaneko A."/>
            <person name="Niida R."/>
            <person name="Mitsuhashi W."/>
            <person name="Dairi T."/>
            <person name="Kato N."/>
            <person name="Sassa T."/>
        </authorList>
    </citation>
    <scope>FUNCTION</scope>
</reference>
<reference key="3">
    <citation type="journal article" date="2011" name="J. Am. Chem. Soc.">
        <title>Dioxygenases, key enzymes to determine the aglycon structures of fusicoccin and brassicicene, diterpene compounds produced by fungi.</title>
        <authorList>
            <person name="Ono Y."/>
            <person name="Minami A."/>
            <person name="Noike M."/>
            <person name="Higuchi Y."/>
            <person name="Toyomasu T."/>
            <person name="Sassa T."/>
            <person name="Kato N."/>
            <person name="Dairi T."/>
        </authorList>
    </citation>
    <scope>FUNCTION</scope>
</reference>
<reference key="4">
    <citation type="journal article" date="2012" name="ChemBioChem">
        <title>An enzyme catalyzing O-prenylation of the glucose moiety of fusicoccin A, a diterpene glucoside produced by the fungus Phomopsis amygdali.</title>
        <authorList>
            <person name="Noike M."/>
            <person name="Liu C."/>
            <person name="Ono Y."/>
            <person name="Hamano Y."/>
            <person name="Toyomasu T."/>
            <person name="Sassa T."/>
            <person name="Kato N."/>
            <person name="Dairi T."/>
        </authorList>
    </citation>
    <scope>FUNCTION</scope>
</reference>
<gene>
    <name evidence="6" type="primary">PaAT-2</name>
    <name evidence="6" type="synonym">orf13</name>
</gene>
<organism>
    <name type="scientific">Phomopsis amygdali</name>
    <name type="common">Fusicoccum amygdali</name>
    <dbReference type="NCBI Taxonomy" id="1214568"/>
    <lineage>
        <taxon>Eukaryota</taxon>
        <taxon>Fungi</taxon>
        <taxon>Dikarya</taxon>
        <taxon>Ascomycota</taxon>
        <taxon>Pezizomycotina</taxon>
        <taxon>Sordariomycetes</taxon>
        <taxon>Sordariomycetidae</taxon>
        <taxon>Diaporthales</taxon>
        <taxon>Diaporthaceae</taxon>
        <taxon>Diaporthe</taxon>
    </lineage>
</organism>
<name>FC13_PHOAM</name>
<dbReference type="EC" id="2.3.1.-" evidence="5"/>
<dbReference type="EMBL" id="AB686277">
    <property type="protein sequence ID" value="BAM71036.1"/>
    <property type="molecule type" value="mRNA"/>
</dbReference>
<dbReference type="SMR" id="L0MZK4"/>
<dbReference type="GO" id="GO:0016747">
    <property type="term" value="F:acyltransferase activity, transferring groups other than amino-acyl groups"/>
    <property type="evidence" value="ECO:0007669"/>
    <property type="project" value="TreeGrafter"/>
</dbReference>
<dbReference type="Gene3D" id="3.30.559.10">
    <property type="entry name" value="Chloramphenicol acetyltransferase-like domain"/>
    <property type="match status" value="2"/>
</dbReference>
<dbReference type="InterPro" id="IPR023213">
    <property type="entry name" value="CAT-like_dom_sf"/>
</dbReference>
<dbReference type="InterPro" id="IPR050317">
    <property type="entry name" value="Plant_Fungal_Acyltransferase"/>
</dbReference>
<dbReference type="PANTHER" id="PTHR31642:SF294">
    <property type="entry name" value="ACETYLTRANSFERASE MATC1"/>
    <property type="match status" value="1"/>
</dbReference>
<dbReference type="PANTHER" id="PTHR31642">
    <property type="entry name" value="TRICHOTHECENE 3-O-ACETYLTRANSFERASE"/>
    <property type="match status" value="1"/>
</dbReference>
<dbReference type="Pfam" id="PF02458">
    <property type="entry name" value="Transferase"/>
    <property type="match status" value="1"/>
</dbReference>
<keyword id="KW-0012">Acyltransferase</keyword>
<keyword id="KW-0808">Transferase</keyword>
<protein>
    <recommendedName>
        <fullName evidence="6">O-acetyltransferase PaAT-2</fullName>
        <ecNumber evidence="5">2.3.1.-</ecNumber>
    </recommendedName>
    <alternativeName>
        <fullName evidence="6">Fusicoccin A biosynthetic gene clusters protein 12</fullName>
    </alternativeName>
</protein>
<evidence type="ECO:0000250" key="1">
    <source>
        <dbReference type="UniProtKB" id="Q70PR7"/>
    </source>
</evidence>
<evidence type="ECO:0000269" key="2">
    <source>
    </source>
</evidence>
<evidence type="ECO:0000269" key="3">
    <source>
    </source>
</evidence>
<evidence type="ECO:0000269" key="4">
    <source>
    </source>
</evidence>
<evidence type="ECO:0000269" key="5">
    <source>
    </source>
</evidence>
<evidence type="ECO:0000303" key="6">
    <source>
    </source>
</evidence>
<evidence type="ECO:0000305" key="7"/>
<sequence length="490" mass="55134">MSQTTVPVDRIVPFHRFDDAIGLRNSILVWTLRFDDVLDAAKLRDSLNALLSIGNWKRLGGRVRKKRDGKLEVHIPESFTPQHPAADFSHTKLDCCIDEHALGRRLPVATEKPKLYESSTIFHEFATRENPPLTIEDYCNSDLPQIGLHVVSFTDATLVSVSWPHTMSDAVGIQTLLINWSRVMAGREIEVQHLEDVESNPLDNLEAGEGGTLKQEEWILKSSLVTGVWFVIWVIRYIWTIIWVSQESKLIYLPARTIKALRREAEDSLVEQTQTLVPGHLEKPFVSDGDVITAWAVRMACLHQASQQTSQQSITIINALDVRARLPDLFKQNTAYVGNFAFALFTKTTVGQVMSTSLGELAHTVRRSLLEQVPQAQIRAMFQELRKTRMGALIVGTATSSPLIFSNWSKTKICEVVDFSPAVIRPGKQGPVISEPGKPVYHHSLHTKRSQTARDAFNILGKDPAGNYWIAAWLPPCAWPRIKEEMQKLP</sequence>
<feature type="chain" id="PRO_0000445464" description="O-acetyltransferase PaAT-2">
    <location>
        <begin position="1"/>
        <end position="490"/>
    </location>
</feature>
<feature type="active site" description="Proton acceptor" evidence="1">
    <location>
        <position position="165"/>
    </location>
</feature>